<gene>
    <name evidence="1" type="primary">rpl5</name>
    <name type="ordered locus">Cmaq_1831</name>
</gene>
<comment type="function">
    <text evidence="1">This is one of the proteins that bind and probably mediate the attachment of the 5S RNA into the large ribosomal subunit, where it forms part of the central protuberance. In the 70S ribosome it contacts protein S13 of the 30S subunit (bridge B1b), connecting the 2 subunits; this bridge is implicated in subunit movement. May contact the P site tRNA; the 5S rRNA and some of its associated proteins might help stabilize positioning of ribosome-bound tRNAs.</text>
</comment>
<comment type="subunit">
    <text evidence="1">Part of the 50S ribosomal subunit; contacts the 5S rRNA and probably tRNA. Forms a bridge to the 30S subunit in the 70S ribosome.</text>
</comment>
<comment type="similarity">
    <text evidence="1">Belongs to the universal ribosomal protein uL5 family.</text>
</comment>
<sequence>MPAIDLSTIDLRAIKPSDLDWRKFTLDTGHPMRRIFIWSVAVNMGIGQSGERLEKAAKVMSELTGRTPSYRLAHKSIKDFGIRRGEPIGLLVTLRRNEAVWFLLRALAAVDFTLREESFNAGNVSFGIREHILVPGSRYDPALGIFGFDVAVTLARPGFRVQYRRRARADVGKDHRVSREETIRFFQDVLGVRILKR</sequence>
<evidence type="ECO:0000255" key="1">
    <source>
        <dbReference type="HAMAP-Rule" id="MF_01333"/>
    </source>
</evidence>
<evidence type="ECO:0000305" key="2"/>
<name>RL5_CALMQ</name>
<dbReference type="EMBL" id="CP000852">
    <property type="protein sequence ID" value="ABW02648.1"/>
    <property type="molecule type" value="Genomic_DNA"/>
</dbReference>
<dbReference type="RefSeq" id="WP_012186867.1">
    <property type="nucleotide sequence ID" value="NC_009954.1"/>
</dbReference>
<dbReference type="SMR" id="A8MB19"/>
<dbReference type="STRING" id="397948.Cmaq_1831"/>
<dbReference type="GeneID" id="5710083"/>
<dbReference type="KEGG" id="cma:Cmaq_1831"/>
<dbReference type="eggNOG" id="arCOG04092">
    <property type="taxonomic scope" value="Archaea"/>
</dbReference>
<dbReference type="HOGENOM" id="CLU_061015_3_0_2"/>
<dbReference type="OrthoDB" id="372044at2157"/>
<dbReference type="Proteomes" id="UP000001137">
    <property type="component" value="Chromosome"/>
</dbReference>
<dbReference type="GO" id="GO:1990904">
    <property type="term" value="C:ribonucleoprotein complex"/>
    <property type="evidence" value="ECO:0007669"/>
    <property type="project" value="UniProtKB-KW"/>
</dbReference>
<dbReference type="GO" id="GO:0005840">
    <property type="term" value="C:ribosome"/>
    <property type="evidence" value="ECO:0007669"/>
    <property type="project" value="UniProtKB-KW"/>
</dbReference>
<dbReference type="GO" id="GO:0019843">
    <property type="term" value="F:rRNA binding"/>
    <property type="evidence" value="ECO:0007669"/>
    <property type="project" value="UniProtKB-UniRule"/>
</dbReference>
<dbReference type="GO" id="GO:0003735">
    <property type="term" value="F:structural constituent of ribosome"/>
    <property type="evidence" value="ECO:0007669"/>
    <property type="project" value="InterPro"/>
</dbReference>
<dbReference type="GO" id="GO:0000049">
    <property type="term" value="F:tRNA binding"/>
    <property type="evidence" value="ECO:0007669"/>
    <property type="project" value="UniProtKB-UniRule"/>
</dbReference>
<dbReference type="GO" id="GO:0006412">
    <property type="term" value="P:translation"/>
    <property type="evidence" value="ECO:0007669"/>
    <property type="project" value="UniProtKB-UniRule"/>
</dbReference>
<dbReference type="FunFam" id="3.30.1440.10:FF:000002">
    <property type="entry name" value="60S ribosomal protein L11"/>
    <property type="match status" value="1"/>
</dbReference>
<dbReference type="Gene3D" id="3.30.1440.10">
    <property type="match status" value="1"/>
</dbReference>
<dbReference type="HAMAP" id="MF_01333_A">
    <property type="entry name" value="Ribosomal_uL5_A"/>
    <property type="match status" value="1"/>
</dbReference>
<dbReference type="InterPro" id="IPR002132">
    <property type="entry name" value="Ribosomal_uL5"/>
</dbReference>
<dbReference type="InterPro" id="IPR022804">
    <property type="entry name" value="Ribosomal_uL5_arc"/>
</dbReference>
<dbReference type="InterPro" id="IPR031309">
    <property type="entry name" value="Ribosomal_uL5_C"/>
</dbReference>
<dbReference type="InterPro" id="IPR022803">
    <property type="entry name" value="Ribosomal_uL5_dom_sf"/>
</dbReference>
<dbReference type="InterPro" id="IPR031310">
    <property type="entry name" value="Ribosomal_uL5_N"/>
</dbReference>
<dbReference type="NCBIfam" id="NF003258">
    <property type="entry name" value="PRK04219.1"/>
    <property type="match status" value="1"/>
</dbReference>
<dbReference type="PANTHER" id="PTHR11994">
    <property type="entry name" value="60S RIBOSOMAL PROTEIN L11-RELATED"/>
    <property type="match status" value="1"/>
</dbReference>
<dbReference type="Pfam" id="PF00281">
    <property type="entry name" value="Ribosomal_L5"/>
    <property type="match status" value="1"/>
</dbReference>
<dbReference type="Pfam" id="PF00673">
    <property type="entry name" value="Ribosomal_L5_C"/>
    <property type="match status" value="1"/>
</dbReference>
<dbReference type="PIRSF" id="PIRSF002161">
    <property type="entry name" value="Ribosomal_L5"/>
    <property type="match status" value="1"/>
</dbReference>
<dbReference type="SUPFAM" id="SSF55282">
    <property type="entry name" value="RL5-like"/>
    <property type="match status" value="1"/>
</dbReference>
<accession>A8MB19</accession>
<reference key="1">
    <citation type="submission" date="2007-10" db="EMBL/GenBank/DDBJ databases">
        <title>Complete sequence of Caldivirga maquilingensis IC-167.</title>
        <authorList>
            <consortium name="US DOE Joint Genome Institute"/>
            <person name="Copeland A."/>
            <person name="Lucas S."/>
            <person name="Lapidus A."/>
            <person name="Barry K."/>
            <person name="Glavina del Rio T."/>
            <person name="Dalin E."/>
            <person name="Tice H."/>
            <person name="Pitluck S."/>
            <person name="Saunders E."/>
            <person name="Brettin T."/>
            <person name="Bruce D."/>
            <person name="Detter J.C."/>
            <person name="Han C."/>
            <person name="Schmutz J."/>
            <person name="Larimer F."/>
            <person name="Land M."/>
            <person name="Hauser L."/>
            <person name="Kyrpides N."/>
            <person name="Ivanova N."/>
            <person name="Biddle J.F."/>
            <person name="Zhang Z."/>
            <person name="Fitz-Gibbon S.T."/>
            <person name="Lowe T.M."/>
            <person name="Saltikov C."/>
            <person name="House C.H."/>
            <person name="Richardson P."/>
        </authorList>
    </citation>
    <scope>NUCLEOTIDE SEQUENCE [LARGE SCALE GENOMIC DNA]</scope>
    <source>
        <strain>ATCC 700844 / DSM 13496 / JCM 10307 / IC-167</strain>
    </source>
</reference>
<proteinExistence type="inferred from homology"/>
<keyword id="KW-1185">Reference proteome</keyword>
<keyword id="KW-0687">Ribonucleoprotein</keyword>
<keyword id="KW-0689">Ribosomal protein</keyword>
<keyword id="KW-0694">RNA-binding</keyword>
<keyword id="KW-0699">rRNA-binding</keyword>
<keyword id="KW-0820">tRNA-binding</keyword>
<feature type="chain" id="PRO_0000365639" description="Large ribosomal subunit protein uL5">
    <location>
        <begin position="1"/>
        <end position="197"/>
    </location>
</feature>
<protein>
    <recommendedName>
        <fullName evidence="1">Large ribosomal subunit protein uL5</fullName>
    </recommendedName>
    <alternativeName>
        <fullName evidence="2">50S ribosomal protein L5</fullName>
    </alternativeName>
</protein>
<organism>
    <name type="scientific">Caldivirga maquilingensis (strain ATCC 700844 / DSM 13496 / JCM 10307 / IC-167)</name>
    <dbReference type="NCBI Taxonomy" id="397948"/>
    <lineage>
        <taxon>Archaea</taxon>
        <taxon>Thermoproteota</taxon>
        <taxon>Thermoprotei</taxon>
        <taxon>Thermoproteales</taxon>
        <taxon>Thermoproteaceae</taxon>
        <taxon>Caldivirga</taxon>
    </lineage>
</organism>